<protein>
    <recommendedName>
        <fullName evidence="1">Small, acid-soluble spore protein K</fullName>
        <shortName evidence="1">SASP K</shortName>
    </recommendedName>
</protein>
<proteinExistence type="inferred from homology"/>
<keyword id="KW-0749">Sporulation</keyword>
<dbReference type="EMBL" id="AE017194">
    <property type="protein sequence ID" value="AAS39509.1"/>
    <property type="molecule type" value="Genomic_DNA"/>
</dbReference>
<dbReference type="KEGG" id="bca:BCE_0574"/>
<dbReference type="HOGENOM" id="CLU_3076423_0_0_9"/>
<dbReference type="Proteomes" id="UP000002527">
    <property type="component" value="Chromosome"/>
</dbReference>
<dbReference type="GO" id="GO:0042601">
    <property type="term" value="C:endospore-forming forespore"/>
    <property type="evidence" value="ECO:0007669"/>
    <property type="project" value="InterPro"/>
</dbReference>
<dbReference type="GO" id="GO:0030436">
    <property type="term" value="P:asexual sporulation"/>
    <property type="evidence" value="ECO:0007669"/>
    <property type="project" value="UniProtKB-UniRule"/>
</dbReference>
<dbReference type="GO" id="GO:0030435">
    <property type="term" value="P:sporulation resulting in formation of a cellular spore"/>
    <property type="evidence" value="ECO:0007669"/>
    <property type="project" value="UniProtKB-KW"/>
</dbReference>
<dbReference type="HAMAP" id="MF_01504">
    <property type="entry name" value="SspK"/>
    <property type="match status" value="1"/>
</dbReference>
<dbReference type="InterPro" id="IPR012611">
    <property type="entry name" value="SASP_SspK"/>
</dbReference>
<dbReference type="NCBIfam" id="NF002843">
    <property type="entry name" value="PRK03081.1"/>
    <property type="match status" value="1"/>
</dbReference>
<dbReference type="NCBIfam" id="TIGR03091">
    <property type="entry name" value="SASP_sspK"/>
    <property type="match status" value="1"/>
</dbReference>
<dbReference type="Pfam" id="PF08176">
    <property type="entry name" value="SspK"/>
    <property type="match status" value="1"/>
</dbReference>
<evidence type="ECO:0000255" key="1">
    <source>
        <dbReference type="HAMAP-Rule" id="MF_01504"/>
    </source>
</evidence>
<evidence type="ECO:0000256" key="2">
    <source>
        <dbReference type="SAM" id="MobiDB-lite"/>
    </source>
</evidence>
<accession>Q73DY6</accession>
<comment type="subcellular location">
    <subcellularLocation>
        <location evidence="1">Spore core</location>
    </subcellularLocation>
</comment>
<comment type="induction">
    <text evidence="1">Expressed only in the forespore compartment of sporulating cells.</text>
</comment>
<comment type="similarity">
    <text evidence="1">Belongs to the SspK family.</text>
</comment>
<reference key="1">
    <citation type="journal article" date="2004" name="Nucleic Acids Res.">
        <title>The genome sequence of Bacillus cereus ATCC 10987 reveals metabolic adaptations and a large plasmid related to Bacillus anthracis pXO1.</title>
        <authorList>
            <person name="Rasko D.A."/>
            <person name="Ravel J."/>
            <person name="Oekstad O.A."/>
            <person name="Helgason E."/>
            <person name="Cer R.Z."/>
            <person name="Jiang L."/>
            <person name="Shores K.A."/>
            <person name="Fouts D.E."/>
            <person name="Tourasse N.J."/>
            <person name="Angiuoli S.V."/>
            <person name="Kolonay J.F."/>
            <person name="Nelson W.C."/>
            <person name="Kolstoe A.-B."/>
            <person name="Fraser C.M."/>
            <person name="Read T.D."/>
        </authorList>
    </citation>
    <scope>NUCLEOTIDE SEQUENCE [LARGE SCALE GENOMIC DNA]</scope>
    <source>
        <strain>ATCC 10987 / NRS 248</strain>
    </source>
</reference>
<name>SSPK_BACC1</name>
<organism>
    <name type="scientific">Bacillus cereus (strain ATCC 10987 / NRS 248)</name>
    <dbReference type="NCBI Taxonomy" id="222523"/>
    <lineage>
        <taxon>Bacteria</taxon>
        <taxon>Bacillati</taxon>
        <taxon>Bacillota</taxon>
        <taxon>Bacilli</taxon>
        <taxon>Bacillales</taxon>
        <taxon>Bacillaceae</taxon>
        <taxon>Bacillus</taxon>
        <taxon>Bacillus cereus group</taxon>
    </lineage>
</organism>
<feature type="chain" id="PRO_0000221459" description="Small, acid-soluble spore protein K">
    <location>
        <begin position="1"/>
        <end position="52"/>
    </location>
</feature>
<feature type="region of interest" description="Disordered" evidence="2">
    <location>
        <begin position="1"/>
        <end position="52"/>
    </location>
</feature>
<gene>
    <name evidence="1" type="primary">sspK</name>
    <name type="ordered locus">BCE_0574</name>
</gene>
<sequence length="52" mass="5946">MGKQAEFWSESKNNSKIDGQPKAKSRFASKRPNGTINTHPQERMRAANQQEE</sequence>